<organism>
    <name type="scientific">Escherichia coli O9:H4 (strain HS)</name>
    <dbReference type="NCBI Taxonomy" id="331112"/>
    <lineage>
        <taxon>Bacteria</taxon>
        <taxon>Pseudomonadati</taxon>
        <taxon>Pseudomonadota</taxon>
        <taxon>Gammaproteobacteria</taxon>
        <taxon>Enterobacterales</taxon>
        <taxon>Enterobacteriaceae</taxon>
        <taxon>Escherichia</taxon>
    </lineage>
</organism>
<reference key="1">
    <citation type="journal article" date="2008" name="J. Bacteriol.">
        <title>The pangenome structure of Escherichia coli: comparative genomic analysis of E. coli commensal and pathogenic isolates.</title>
        <authorList>
            <person name="Rasko D.A."/>
            <person name="Rosovitz M.J."/>
            <person name="Myers G.S.A."/>
            <person name="Mongodin E.F."/>
            <person name="Fricke W.F."/>
            <person name="Gajer P."/>
            <person name="Crabtree J."/>
            <person name="Sebaihia M."/>
            <person name="Thomson N.R."/>
            <person name="Chaudhuri R."/>
            <person name="Henderson I.R."/>
            <person name="Sperandio V."/>
            <person name="Ravel J."/>
        </authorList>
    </citation>
    <scope>NUCLEOTIDE SEQUENCE [LARGE SCALE GENOMIC DNA]</scope>
    <source>
        <strain>HS</strain>
    </source>
</reference>
<keyword id="KW-0560">Oxidoreductase</keyword>
<name>MSRA_ECOHS</name>
<proteinExistence type="inferred from homology"/>
<accession>A8A7X5</accession>
<feature type="chain" id="PRO_1000068325" description="Peptide methionine sulfoxide reductase MsrA">
    <location>
        <begin position="1"/>
        <end position="212"/>
    </location>
</feature>
<feature type="active site" evidence="1">
    <location>
        <position position="52"/>
    </location>
</feature>
<dbReference type="EC" id="1.8.4.11" evidence="1"/>
<dbReference type="EMBL" id="CP000802">
    <property type="protein sequence ID" value="ABV08629.1"/>
    <property type="molecule type" value="Genomic_DNA"/>
</dbReference>
<dbReference type="RefSeq" id="WP_001295196.1">
    <property type="nucleotide sequence ID" value="NC_009800.1"/>
</dbReference>
<dbReference type="BMRB" id="A8A7X5"/>
<dbReference type="SMR" id="A8A7X5"/>
<dbReference type="GeneID" id="93777602"/>
<dbReference type="KEGG" id="ecx:EcHS_A4473"/>
<dbReference type="HOGENOM" id="CLU_031040_10_3_6"/>
<dbReference type="GO" id="GO:0005737">
    <property type="term" value="C:cytoplasm"/>
    <property type="evidence" value="ECO:0007669"/>
    <property type="project" value="TreeGrafter"/>
</dbReference>
<dbReference type="GO" id="GO:0036456">
    <property type="term" value="F:L-methionine-(S)-S-oxide reductase activity"/>
    <property type="evidence" value="ECO:0007669"/>
    <property type="project" value="TreeGrafter"/>
</dbReference>
<dbReference type="GO" id="GO:0008113">
    <property type="term" value="F:peptide-methionine (S)-S-oxide reductase activity"/>
    <property type="evidence" value="ECO:0007669"/>
    <property type="project" value="UniProtKB-UniRule"/>
</dbReference>
<dbReference type="GO" id="GO:0034599">
    <property type="term" value="P:cellular response to oxidative stress"/>
    <property type="evidence" value="ECO:0007669"/>
    <property type="project" value="TreeGrafter"/>
</dbReference>
<dbReference type="GO" id="GO:0036211">
    <property type="term" value="P:protein modification process"/>
    <property type="evidence" value="ECO:0007669"/>
    <property type="project" value="UniProtKB-UniRule"/>
</dbReference>
<dbReference type="FunFam" id="3.30.1060.10:FF:000001">
    <property type="entry name" value="Peptide methionine sulfoxide reductase MsrA"/>
    <property type="match status" value="1"/>
</dbReference>
<dbReference type="Gene3D" id="3.30.1060.10">
    <property type="entry name" value="Peptide methionine sulphoxide reductase MsrA"/>
    <property type="match status" value="1"/>
</dbReference>
<dbReference type="HAMAP" id="MF_01401">
    <property type="entry name" value="MsrA"/>
    <property type="match status" value="1"/>
</dbReference>
<dbReference type="InterPro" id="IPR002569">
    <property type="entry name" value="Met_Sox_Rdtase_MsrA_dom"/>
</dbReference>
<dbReference type="InterPro" id="IPR036509">
    <property type="entry name" value="Met_Sox_Rdtase_MsrA_sf"/>
</dbReference>
<dbReference type="InterPro" id="IPR050162">
    <property type="entry name" value="MsrA_MetSO_reductase"/>
</dbReference>
<dbReference type="NCBIfam" id="TIGR00401">
    <property type="entry name" value="msrA"/>
    <property type="match status" value="1"/>
</dbReference>
<dbReference type="PANTHER" id="PTHR42799">
    <property type="entry name" value="MITOCHONDRIAL PEPTIDE METHIONINE SULFOXIDE REDUCTASE"/>
    <property type="match status" value="1"/>
</dbReference>
<dbReference type="PANTHER" id="PTHR42799:SF2">
    <property type="entry name" value="MITOCHONDRIAL PEPTIDE METHIONINE SULFOXIDE REDUCTASE"/>
    <property type="match status" value="1"/>
</dbReference>
<dbReference type="Pfam" id="PF01625">
    <property type="entry name" value="PMSR"/>
    <property type="match status" value="1"/>
</dbReference>
<dbReference type="SUPFAM" id="SSF55068">
    <property type="entry name" value="Peptide methionine sulfoxide reductase"/>
    <property type="match status" value="1"/>
</dbReference>
<sequence>MSLFDKKHLVSPADALPGRNTPMPVATLHAVNGHSMTNVPDGMEIAIFAMGCFWGVERLFWQLPGVYSTAAGYTGGYTPNPTYREVCSGDTGHAEAVRIVYDPSVISYEQLLQVFWENHDPAQGMRQGNDHGTQYRSAIYPLTPEQDAAARASLERFQAAMLAADDDRHITTEIANATPFYYAEDDHQQYLHKNPYGYCGIGGIGVCLPPEA</sequence>
<evidence type="ECO:0000255" key="1">
    <source>
        <dbReference type="HAMAP-Rule" id="MF_01401"/>
    </source>
</evidence>
<comment type="function">
    <text evidence="1">Has an important function as a repair enzyme for proteins that have been inactivated by oxidation. Catalyzes the reversible oxidation-reduction of methionine sulfoxide in proteins to methionine.</text>
</comment>
<comment type="catalytic activity">
    <reaction evidence="1">
        <text>L-methionyl-[protein] + [thioredoxin]-disulfide + H2O = L-methionyl-(S)-S-oxide-[protein] + [thioredoxin]-dithiol</text>
        <dbReference type="Rhea" id="RHEA:14217"/>
        <dbReference type="Rhea" id="RHEA-COMP:10698"/>
        <dbReference type="Rhea" id="RHEA-COMP:10700"/>
        <dbReference type="Rhea" id="RHEA-COMP:12313"/>
        <dbReference type="Rhea" id="RHEA-COMP:12315"/>
        <dbReference type="ChEBI" id="CHEBI:15377"/>
        <dbReference type="ChEBI" id="CHEBI:16044"/>
        <dbReference type="ChEBI" id="CHEBI:29950"/>
        <dbReference type="ChEBI" id="CHEBI:44120"/>
        <dbReference type="ChEBI" id="CHEBI:50058"/>
        <dbReference type="EC" id="1.8.4.11"/>
    </reaction>
</comment>
<comment type="catalytic activity">
    <reaction evidence="1">
        <text>[thioredoxin]-disulfide + L-methionine + H2O = L-methionine (S)-S-oxide + [thioredoxin]-dithiol</text>
        <dbReference type="Rhea" id="RHEA:19993"/>
        <dbReference type="Rhea" id="RHEA-COMP:10698"/>
        <dbReference type="Rhea" id="RHEA-COMP:10700"/>
        <dbReference type="ChEBI" id="CHEBI:15377"/>
        <dbReference type="ChEBI" id="CHEBI:29950"/>
        <dbReference type="ChEBI" id="CHEBI:50058"/>
        <dbReference type="ChEBI" id="CHEBI:57844"/>
        <dbReference type="ChEBI" id="CHEBI:58772"/>
        <dbReference type="EC" id="1.8.4.11"/>
    </reaction>
</comment>
<comment type="similarity">
    <text evidence="1">Belongs to the MsrA Met sulfoxide reductase family.</text>
</comment>
<gene>
    <name evidence="1" type="primary">msrA</name>
    <name type="ordered locus">EcHS_A4473</name>
</gene>
<protein>
    <recommendedName>
        <fullName evidence="1">Peptide methionine sulfoxide reductase MsrA</fullName>
        <shortName evidence="1">Protein-methionine-S-oxide reductase</shortName>
        <ecNumber evidence="1">1.8.4.11</ecNumber>
    </recommendedName>
    <alternativeName>
        <fullName evidence="1">Peptide-methionine (S)-S-oxide reductase</fullName>
        <shortName evidence="1">Peptide Met(O) reductase</shortName>
    </alternativeName>
</protein>